<accession>Q8DMM7</accession>
<name>RS19_THEVB</name>
<comment type="function">
    <text evidence="1">Protein S19 forms a complex with S13 that binds strongly to the 16S ribosomal RNA.</text>
</comment>
<comment type="similarity">
    <text evidence="1">Belongs to the universal ribosomal protein uS19 family.</text>
</comment>
<keyword id="KW-1185">Reference proteome</keyword>
<keyword id="KW-0687">Ribonucleoprotein</keyword>
<keyword id="KW-0689">Ribosomal protein</keyword>
<keyword id="KW-0694">RNA-binding</keyword>
<keyword id="KW-0699">rRNA-binding</keyword>
<evidence type="ECO:0000255" key="1">
    <source>
        <dbReference type="HAMAP-Rule" id="MF_00531"/>
    </source>
</evidence>
<evidence type="ECO:0000305" key="2"/>
<feature type="chain" id="PRO_0000129921" description="Small ribosomal subunit protein uS19">
    <location>
        <begin position="1"/>
        <end position="92"/>
    </location>
</feature>
<protein>
    <recommendedName>
        <fullName evidence="1">Small ribosomal subunit protein uS19</fullName>
    </recommendedName>
    <alternativeName>
        <fullName evidence="2">30S ribosomal protein S19</fullName>
    </alternativeName>
</protein>
<proteinExistence type="inferred from homology"/>
<dbReference type="EMBL" id="BA000039">
    <property type="protein sequence ID" value="BAC07638.1"/>
    <property type="molecule type" value="Genomic_DNA"/>
</dbReference>
<dbReference type="RefSeq" id="NP_680876.1">
    <property type="nucleotide sequence ID" value="NC_004113.1"/>
</dbReference>
<dbReference type="RefSeq" id="WP_011055940.1">
    <property type="nucleotide sequence ID" value="NC_004113.1"/>
</dbReference>
<dbReference type="SMR" id="Q8DMM7"/>
<dbReference type="STRING" id="197221.gene:10746663"/>
<dbReference type="EnsemblBacteria" id="BAC07638">
    <property type="protein sequence ID" value="BAC07638"/>
    <property type="gene ID" value="BAC07638"/>
</dbReference>
<dbReference type="KEGG" id="tel:tsr0085"/>
<dbReference type="PATRIC" id="fig|197221.4.peg.88"/>
<dbReference type="eggNOG" id="COG0185">
    <property type="taxonomic scope" value="Bacteria"/>
</dbReference>
<dbReference type="Proteomes" id="UP000000440">
    <property type="component" value="Chromosome"/>
</dbReference>
<dbReference type="GO" id="GO:0005737">
    <property type="term" value="C:cytoplasm"/>
    <property type="evidence" value="ECO:0007669"/>
    <property type="project" value="UniProtKB-ARBA"/>
</dbReference>
<dbReference type="GO" id="GO:0015935">
    <property type="term" value="C:small ribosomal subunit"/>
    <property type="evidence" value="ECO:0007669"/>
    <property type="project" value="InterPro"/>
</dbReference>
<dbReference type="GO" id="GO:0019843">
    <property type="term" value="F:rRNA binding"/>
    <property type="evidence" value="ECO:0007669"/>
    <property type="project" value="UniProtKB-UniRule"/>
</dbReference>
<dbReference type="GO" id="GO:0003735">
    <property type="term" value="F:structural constituent of ribosome"/>
    <property type="evidence" value="ECO:0007669"/>
    <property type="project" value="InterPro"/>
</dbReference>
<dbReference type="GO" id="GO:0000028">
    <property type="term" value="P:ribosomal small subunit assembly"/>
    <property type="evidence" value="ECO:0007669"/>
    <property type="project" value="TreeGrafter"/>
</dbReference>
<dbReference type="GO" id="GO:0006412">
    <property type="term" value="P:translation"/>
    <property type="evidence" value="ECO:0007669"/>
    <property type="project" value="UniProtKB-UniRule"/>
</dbReference>
<dbReference type="FunFam" id="3.30.860.10:FF:000001">
    <property type="entry name" value="30S ribosomal protein S19"/>
    <property type="match status" value="1"/>
</dbReference>
<dbReference type="Gene3D" id="3.30.860.10">
    <property type="entry name" value="30s Ribosomal Protein S19, Chain A"/>
    <property type="match status" value="1"/>
</dbReference>
<dbReference type="HAMAP" id="MF_00531">
    <property type="entry name" value="Ribosomal_uS19"/>
    <property type="match status" value="1"/>
</dbReference>
<dbReference type="InterPro" id="IPR002222">
    <property type="entry name" value="Ribosomal_uS19"/>
</dbReference>
<dbReference type="InterPro" id="IPR005732">
    <property type="entry name" value="Ribosomal_uS19_bac-type"/>
</dbReference>
<dbReference type="InterPro" id="IPR020934">
    <property type="entry name" value="Ribosomal_uS19_CS"/>
</dbReference>
<dbReference type="InterPro" id="IPR023575">
    <property type="entry name" value="Ribosomal_uS19_SF"/>
</dbReference>
<dbReference type="NCBIfam" id="TIGR01050">
    <property type="entry name" value="rpsS_bact"/>
    <property type="match status" value="1"/>
</dbReference>
<dbReference type="PANTHER" id="PTHR11880">
    <property type="entry name" value="RIBOSOMAL PROTEIN S19P FAMILY MEMBER"/>
    <property type="match status" value="1"/>
</dbReference>
<dbReference type="PANTHER" id="PTHR11880:SF8">
    <property type="entry name" value="SMALL RIBOSOMAL SUBUNIT PROTEIN US19M"/>
    <property type="match status" value="1"/>
</dbReference>
<dbReference type="Pfam" id="PF00203">
    <property type="entry name" value="Ribosomal_S19"/>
    <property type="match status" value="1"/>
</dbReference>
<dbReference type="PIRSF" id="PIRSF002144">
    <property type="entry name" value="Ribosomal_S19"/>
    <property type="match status" value="1"/>
</dbReference>
<dbReference type="PRINTS" id="PR00975">
    <property type="entry name" value="RIBOSOMALS19"/>
</dbReference>
<dbReference type="SUPFAM" id="SSF54570">
    <property type="entry name" value="Ribosomal protein S19"/>
    <property type="match status" value="1"/>
</dbReference>
<dbReference type="PROSITE" id="PS00323">
    <property type="entry name" value="RIBOSOMAL_S19"/>
    <property type="match status" value="1"/>
</dbReference>
<reference key="1">
    <citation type="journal article" date="2002" name="DNA Res.">
        <title>Complete genome structure of the thermophilic cyanobacterium Thermosynechococcus elongatus BP-1.</title>
        <authorList>
            <person name="Nakamura Y."/>
            <person name="Kaneko T."/>
            <person name="Sato S."/>
            <person name="Ikeuchi M."/>
            <person name="Katoh H."/>
            <person name="Sasamoto S."/>
            <person name="Watanabe A."/>
            <person name="Iriguchi M."/>
            <person name="Kawashima K."/>
            <person name="Kimura T."/>
            <person name="Kishida Y."/>
            <person name="Kiyokawa C."/>
            <person name="Kohara M."/>
            <person name="Matsumoto M."/>
            <person name="Matsuno A."/>
            <person name="Nakazaki N."/>
            <person name="Shimpo S."/>
            <person name="Sugimoto M."/>
            <person name="Takeuchi C."/>
            <person name="Yamada M."/>
            <person name="Tabata S."/>
        </authorList>
    </citation>
    <scope>NUCLEOTIDE SEQUENCE [LARGE SCALE GENOMIC DNA]</scope>
    <source>
        <strain>NIES-2133 / IAM M-273 / BP-1</strain>
    </source>
</reference>
<sequence length="92" mass="10432">MGRSLKKGPFVADHLLRKIEALNERNAKEVIKTWSRASTIVPEMIGHTIAVHNGKQHVPVYITEQMVGHKLGEFAPTRNFRSHVKGDKKARH</sequence>
<organism>
    <name type="scientific">Thermosynechococcus vestitus (strain NIES-2133 / IAM M-273 / BP-1)</name>
    <dbReference type="NCBI Taxonomy" id="197221"/>
    <lineage>
        <taxon>Bacteria</taxon>
        <taxon>Bacillati</taxon>
        <taxon>Cyanobacteriota</taxon>
        <taxon>Cyanophyceae</taxon>
        <taxon>Acaryochloridales</taxon>
        <taxon>Thermosynechococcaceae</taxon>
        <taxon>Thermosynechococcus</taxon>
    </lineage>
</organism>
<gene>
    <name evidence="1" type="primary">rpsS</name>
    <name evidence="1" type="synonym">rps19</name>
    <name type="ordered locus">tsr0085</name>
</gene>